<accession>P52614</accession>
<reference key="1">
    <citation type="journal article" date="1996" name="J. Bacteriol.">
        <title>Characterization of the flagellar hook length control protein fliK of Salmonella typhimurium and Escherichia coli.</title>
        <authorList>
            <person name="Kawagishi I."/>
            <person name="Homma M."/>
            <person name="Williams A.W."/>
            <person name="Macnab R.M."/>
        </authorList>
    </citation>
    <scope>NUCLEOTIDE SEQUENCE [GENOMIC DNA]</scope>
    <source>
        <strain>K12 / KS650</strain>
    </source>
</reference>
<reference key="2">
    <citation type="journal article" date="1996" name="DNA Res.">
        <title>A 460-kb DNA sequence of the Escherichia coli K-12 genome corresponding to the 40.1-50.0 min region on the linkage map.</title>
        <authorList>
            <person name="Itoh T."/>
            <person name="Aiba H."/>
            <person name="Baba T."/>
            <person name="Fujita K."/>
            <person name="Hayashi K."/>
            <person name="Inada T."/>
            <person name="Isono K."/>
            <person name="Kasai H."/>
            <person name="Kimura S."/>
            <person name="Kitakawa M."/>
            <person name="Kitagawa M."/>
            <person name="Makino K."/>
            <person name="Miki T."/>
            <person name="Mizobuchi K."/>
            <person name="Mori H."/>
            <person name="Mori T."/>
            <person name="Motomura K."/>
            <person name="Nakade S."/>
            <person name="Nakamura Y."/>
            <person name="Nashimoto H."/>
            <person name="Nishio Y."/>
            <person name="Oshima T."/>
            <person name="Saito N."/>
            <person name="Sampei G."/>
            <person name="Seki Y."/>
            <person name="Sivasundaram S."/>
            <person name="Tagami H."/>
            <person name="Takeda J."/>
            <person name="Takemoto K."/>
            <person name="Wada C."/>
            <person name="Yamamoto Y."/>
            <person name="Horiuchi T."/>
        </authorList>
    </citation>
    <scope>NUCLEOTIDE SEQUENCE [LARGE SCALE GENOMIC DNA]</scope>
    <source>
        <strain>K12 / W3110 / ATCC 27325 / DSM 5911</strain>
    </source>
</reference>
<reference key="3">
    <citation type="journal article" date="1997" name="Science">
        <title>The complete genome sequence of Escherichia coli K-12.</title>
        <authorList>
            <person name="Blattner F.R."/>
            <person name="Plunkett G. III"/>
            <person name="Bloch C.A."/>
            <person name="Perna N.T."/>
            <person name="Burland V."/>
            <person name="Riley M."/>
            <person name="Collado-Vides J."/>
            <person name="Glasner J.D."/>
            <person name="Rode C.K."/>
            <person name="Mayhew G.F."/>
            <person name="Gregor J."/>
            <person name="Davis N.W."/>
            <person name="Kirkpatrick H.A."/>
            <person name="Goeden M.A."/>
            <person name="Rose D.J."/>
            <person name="Mau B."/>
            <person name="Shao Y."/>
        </authorList>
    </citation>
    <scope>NUCLEOTIDE SEQUENCE [LARGE SCALE GENOMIC DNA]</scope>
    <source>
        <strain>K12 / MG1655 / ATCC 47076</strain>
    </source>
</reference>
<reference key="4">
    <citation type="journal article" date="2006" name="Mol. Syst. Biol.">
        <title>Highly accurate genome sequences of Escherichia coli K-12 strains MG1655 and W3110.</title>
        <authorList>
            <person name="Hayashi K."/>
            <person name="Morooka N."/>
            <person name="Yamamoto Y."/>
            <person name="Fujita K."/>
            <person name="Isono K."/>
            <person name="Choi S."/>
            <person name="Ohtsubo E."/>
            <person name="Baba T."/>
            <person name="Wanner B.L."/>
            <person name="Mori H."/>
            <person name="Horiuchi T."/>
        </authorList>
    </citation>
    <scope>NUCLEOTIDE SEQUENCE [LARGE SCALE GENOMIC DNA]</scope>
    <source>
        <strain>K12 / W3110 / ATCC 27325 / DSM 5911</strain>
    </source>
</reference>
<name>FLIK_ECOLI</name>
<proteinExistence type="inferred from homology"/>
<feature type="chain" id="PRO_0000180908" description="Flagellar hook-length control protein">
    <location>
        <begin position="1"/>
        <end position="375"/>
    </location>
</feature>
<feature type="region of interest" description="Disordered" evidence="1">
    <location>
        <begin position="319"/>
        <end position="363"/>
    </location>
</feature>
<feature type="compositionally biased region" description="Low complexity" evidence="1">
    <location>
        <begin position="328"/>
        <end position="339"/>
    </location>
</feature>
<comment type="function">
    <text>Controls the length of the flagellar hook.</text>
</comment>
<comment type="domain">
    <text>Two-domain protein with the central portion of the sequence acting as a hinge or connector between the two.</text>
</comment>
<comment type="similarity">
    <text evidence="2">Belongs to the FliK family.</text>
</comment>
<protein>
    <recommendedName>
        <fullName>Flagellar hook-length control protein</fullName>
    </recommendedName>
</protein>
<gene>
    <name type="primary">fliK</name>
    <name type="synonym">flaE</name>
    <name type="synonym">flaR</name>
    <name type="ordered locus">b1943</name>
    <name type="ordered locus">JW1927</name>
</gene>
<evidence type="ECO:0000256" key="1">
    <source>
        <dbReference type="SAM" id="MobiDB-lite"/>
    </source>
</evidence>
<evidence type="ECO:0000305" key="2"/>
<dbReference type="EMBL" id="L43491">
    <property type="protein sequence ID" value="AAB06632.1"/>
    <property type="molecule type" value="Genomic_DNA"/>
</dbReference>
<dbReference type="EMBL" id="L49147">
    <property type="protein sequence ID" value="AAA82639.1"/>
    <property type="molecule type" value="Genomic_DNA"/>
</dbReference>
<dbReference type="EMBL" id="U00096">
    <property type="protein sequence ID" value="AAC75010.1"/>
    <property type="molecule type" value="Genomic_DNA"/>
</dbReference>
<dbReference type="EMBL" id="AP009048">
    <property type="protein sequence ID" value="BAA15768.1"/>
    <property type="molecule type" value="Genomic_DNA"/>
</dbReference>
<dbReference type="PIR" id="D64958">
    <property type="entry name" value="D64958"/>
</dbReference>
<dbReference type="RefSeq" id="NP_416453.1">
    <property type="nucleotide sequence ID" value="NC_000913.3"/>
</dbReference>
<dbReference type="RefSeq" id="WP_000620071.1">
    <property type="nucleotide sequence ID" value="NZ_LN832404.1"/>
</dbReference>
<dbReference type="SMR" id="P52614"/>
<dbReference type="BioGRID" id="4260391">
    <property type="interactions" value="16"/>
</dbReference>
<dbReference type="BioGRID" id="850803">
    <property type="interactions" value="3"/>
</dbReference>
<dbReference type="FunCoup" id="P52614">
    <property type="interactions" value="133"/>
</dbReference>
<dbReference type="IntAct" id="P52614">
    <property type="interactions" value="15"/>
</dbReference>
<dbReference type="STRING" id="511145.b1943"/>
<dbReference type="TCDB" id="8.A.153.1.1">
    <property type="family name" value="the regulator of the flagellar protein export apparatus, flik (flik) family"/>
</dbReference>
<dbReference type="PaxDb" id="511145-b1943"/>
<dbReference type="EnsemblBacteria" id="AAC75010">
    <property type="protein sequence ID" value="AAC75010"/>
    <property type="gene ID" value="b1943"/>
</dbReference>
<dbReference type="GeneID" id="946449"/>
<dbReference type="KEGG" id="ecj:JW1927"/>
<dbReference type="KEGG" id="eco:b1943"/>
<dbReference type="KEGG" id="ecoc:C3026_11005"/>
<dbReference type="PATRIC" id="fig|1411691.4.peg.308"/>
<dbReference type="EchoBASE" id="EB4165"/>
<dbReference type="eggNOG" id="COG3144">
    <property type="taxonomic scope" value="Bacteria"/>
</dbReference>
<dbReference type="HOGENOM" id="CLU_039492_0_0_6"/>
<dbReference type="InParanoid" id="P52614"/>
<dbReference type="OMA" id="VMWLSSQ"/>
<dbReference type="OrthoDB" id="1792985at2"/>
<dbReference type="PhylomeDB" id="P52614"/>
<dbReference type="BioCyc" id="EcoCyc:G379-MONOMER"/>
<dbReference type="PRO" id="PR:P52614"/>
<dbReference type="Proteomes" id="UP000000625">
    <property type="component" value="Chromosome"/>
</dbReference>
<dbReference type="GO" id="GO:0009424">
    <property type="term" value="C:bacterial-type flagellum hook"/>
    <property type="evidence" value="ECO:0000315"/>
    <property type="project" value="EcoliWiki"/>
</dbReference>
<dbReference type="GO" id="GO:0044780">
    <property type="term" value="P:bacterial-type flagellum assembly"/>
    <property type="evidence" value="ECO:0007669"/>
    <property type="project" value="InterPro"/>
</dbReference>
<dbReference type="GO" id="GO:0071973">
    <property type="term" value="P:bacterial-type flagellum-dependent cell motility"/>
    <property type="evidence" value="ECO:0000315"/>
    <property type="project" value="EcoCyc"/>
</dbReference>
<dbReference type="CDD" id="cd17470">
    <property type="entry name" value="T3SS_Flik_C"/>
    <property type="match status" value="1"/>
</dbReference>
<dbReference type="Gene3D" id="3.30.750.140">
    <property type="match status" value="1"/>
</dbReference>
<dbReference type="InterPro" id="IPR001635">
    <property type="entry name" value="Flag_hook_Flik"/>
</dbReference>
<dbReference type="InterPro" id="IPR021136">
    <property type="entry name" value="Flagellar_hook_control-like_C"/>
</dbReference>
<dbReference type="InterPro" id="IPR052563">
    <property type="entry name" value="FliK"/>
</dbReference>
<dbReference type="InterPro" id="IPR038610">
    <property type="entry name" value="FliK-like_C_sf"/>
</dbReference>
<dbReference type="PANTHER" id="PTHR37533">
    <property type="entry name" value="FLAGELLAR HOOK-LENGTH CONTROL PROTEIN"/>
    <property type="match status" value="1"/>
</dbReference>
<dbReference type="PANTHER" id="PTHR37533:SF2">
    <property type="entry name" value="FLAGELLAR HOOK-LENGTH CONTROL PROTEIN"/>
    <property type="match status" value="1"/>
</dbReference>
<dbReference type="Pfam" id="PF02120">
    <property type="entry name" value="Flg_hook"/>
    <property type="match status" value="1"/>
</dbReference>
<dbReference type="PRINTS" id="PR01007">
    <property type="entry name" value="FLGHOOKFLIK"/>
</dbReference>
<organism>
    <name type="scientific">Escherichia coli (strain K12)</name>
    <dbReference type="NCBI Taxonomy" id="83333"/>
    <lineage>
        <taxon>Bacteria</taxon>
        <taxon>Pseudomonadati</taxon>
        <taxon>Pseudomonadota</taxon>
        <taxon>Gammaproteobacteria</taxon>
        <taxon>Enterobacterales</taxon>
        <taxon>Enterobacteriaceae</taxon>
        <taxon>Escherichia</taxon>
    </lineage>
</organism>
<keyword id="KW-1005">Bacterial flagellum biogenesis</keyword>
<keyword id="KW-1185">Reference proteome</keyword>
<sequence length="375" mass="39312">MIRLAPLITADVDTTTLPGGKASDAAQDFLALLSEALAGETTTDKAAPQLLVATDKPTTKGEPLISDIVSDAQQANLLIPVDETPPVINDEQSTSTPLTTAQTMALAAVADKNTTKDEKADDLNEDVTASLSALFAMLPGFDNTPKVTDAPSTVLPTEKPTLFTKLTSEQLTTAQPDDAPGTPAQPLTPLVAEAQSKAEVISTPSPVTAAASPLITPHQTQPLPTVAAPVLSAPLGSHEWQQSLSQHISLFTRQGQQSAELRLHPQDLGEVQISLKVDDNQAQIQMVSPHQHVRAALEAALPVLRTQLAESGIQLGQSNISGESFSGQQQAASQQQQSQRTANHEPLAGEDDDTLPVPVSLQGRVTGNSGVDIFA</sequence>